<name>MTFA_ECOL5</name>
<reference key="1">
    <citation type="journal article" date="1999" name="FEMS Microbiol. Lett.">
        <title>Characterization of the integration site of Yersinia high-pathogenicity island in Escherichia coli.</title>
        <authorList>
            <person name="Schubert S."/>
            <person name="Rakin A."/>
            <person name="Fischer D."/>
            <person name="Sorsa J."/>
            <person name="Heesemann J."/>
        </authorList>
    </citation>
    <scope>NUCLEOTIDE SEQUENCE [GENOMIC DNA]</scope>
</reference>
<reference key="2">
    <citation type="journal article" date="2006" name="Mol. Microbiol.">
        <title>Role of pathogenicity island-associated integrases in the genome plasticity of uropathogenic Escherichia coli strain 536.</title>
        <authorList>
            <person name="Hochhut B."/>
            <person name="Wilde C."/>
            <person name="Balling G."/>
            <person name="Middendorf B."/>
            <person name="Dobrindt U."/>
            <person name="Brzuszkiewicz E."/>
            <person name="Gottschalk G."/>
            <person name="Carniel E."/>
            <person name="Hacker J."/>
        </authorList>
    </citation>
    <scope>NUCLEOTIDE SEQUENCE [LARGE SCALE GENOMIC DNA]</scope>
    <source>
        <strain>536 / UPEC</strain>
    </source>
</reference>
<gene>
    <name evidence="1" type="primary">mtfA</name>
    <name type="ordered locus">ECP_1934</name>
</gene>
<organism>
    <name type="scientific">Escherichia coli O6:K15:H31 (strain 536 / UPEC)</name>
    <dbReference type="NCBI Taxonomy" id="362663"/>
    <lineage>
        <taxon>Bacteria</taxon>
        <taxon>Pseudomonadati</taxon>
        <taxon>Pseudomonadota</taxon>
        <taxon>Gammaproteobacteria</taxon>
        <taxon>Enterobacterales</taxon>
        <taxon>Enterobacteriaceae</taxon>
        <taxon>Escherichia</taxon>
    </lineage>
</organism>
<evidence type="ECO:0000255" key="1">
    <source>
        <dbReference type="HAMAP-Rule" id="MF_01593"/>
    </source>
</evidence>
<evidence type="ECO:0000305" key="2"/>
<comment type="function">
    <text evidence="1">Involved in the modulation of the activity of the glucose-phosphotransferase system (glucose-PTS). Interacts with the transcriptional repressor Mlc, preventing its interaction with DNA and leading to the modulation of expression of genes regulated by Mlc, including ptsG, which encodes the PTS system glucose-specific EIICB component.</text>
</comment>
<comment type="function">
    <text evidence="1">Shows zinc-dependent metallopeptidase activity.</text>
</comment>
<comment type="cofactor">
    <cofactor evidence="1">
        <name>Zn(2+)</name>
        <dbReference type="ChEBI" id="CHEBI:29105"/>
    </cofactor>
    <text evidence="1">Binds 1 zinc ion per subunit.</text>
</comment>
<comment type="subunit">
    <text evidence="1">Interacts with Mlc.</text>
</comment>
<comment type="subcellular location">
    <subcellularLocation>
        <location evidence="1">Cytoplasm</location>
    </subcellularLocation>
</comment>
<comment type="similarity">
    <text evidence="1">Belongs to the MtfA family.</text>
</comment>
<accession>Q0TGJ4</accession>
<accession>Q7BQS3</accession>
<dbReference type="EC" id="3.4.11.-" evidence="1"/>
<dbReference type="EMBL" id="AF135406">
    <property type="protein sequence ID" value="AAD37508.1"/>
    <property type="molecule type" value="Genomic_DNA"/>
</dbReference>
<dbReference type="EMBL" id="CP000247">
    <property type="protein sequence ID" value="ABG69935.1"/>
    <property type="molecule type" value="Genomic_DNA"/>
</dbReference>
<dbReference type="RefSeq" id="WP_001325918.1">
    <property type="nucleotide sequence ID" value="NC_008253.1"/>
</dbReference>
<dbReference type="SMR" id="Q0TGJ4"/>
<dbReference type="MEROPS" id="M90.001"/>
<dbReference type="KEGG" id="ecp:ECP_1934"/>
<dbReference type="HOGENOM" id="CLU_063037_2_0_6"/>
<dbReference type="Proteomes" id="UP000009182">
    <property type="component" value="Chromosome"/>
</dbReference>
<dbReference type="GO" id="GO:0005829">
    <property type="term" value="C:cytosol"/>
    <property type="evidence" value="ECO:0007669"/>
    <property type="project" value="TreeGrafter"/>
</dbReference>
<dbReference type="GO" id="GO:0004177">
    <property type="term" value="F:aminopeptidase activity"/>
    <property type="evidence" value="ECO:0007669"/>
    <property type="project" value="UniProtKB-UniRule"/>
</dbReference>
<dbReference type="GO" id="GO:0008237">
    <property type="term" value="F:metallopeptidase activity"/>
    <property type="evidence" value="ECO:0007669"/>
    <property type="project" value="UniProtKB-UniRule"/>
</dbReference>
<dbReference type="GO" id="GO:0008270">
    <property type="term" value="F:zinc ion binding"/>
    <property type="evidence" value="ECO:0007669"/>
    <property type="project" value="UniProtKB-UniRule"/>
</dbReference>
<dbReference type="GO" id="GO:0006508">
    <property type="term" value="P:proteolysis"/>
    <property type="evidence" value="ECO:0007669"/>
    <property type="project" value="UniProtKB-KW"/>
</dbReference>
<dbReference type="CDD" id="cd20169">
    <property type="entry name" value="Peptidase_M90_mtfA"/>
    <property type="match status" value="1"/>
</dbReference>
<dbReference type="FunFam" id="1.10.472.150:FF:000001">
    <property type="entry name" value="Protein MtfA"/>
    <property type="match status" value="1"/>
</dbReference>
<dbReference type="FunFam" id="3.40.390.10:FF:000012">
    <property type="entry name" value="Protein MtfA"/>
    <property type="match status" value="1"/>
</dbReference>
<dbReference type="Gene3D" id="3.40.390.10">
    <property type="entry name" value="Collagenase (Catalytic Domain)"/>
    <property type="match status" value="1"/>
</dbReference>
<dbReference type="Gene3D" id="1.10.472.150">
    <property type="entry name" value="Glucose-regulated metallo-peptidase M90, N-terminal domain"/>
    <property type="match status" value="1"/>
</dbReference>
<dbReference type="HAMAP" id="MF_01593">
    <property type="entry name" value="MtfA"/>
    <property type="match status" value="1"/>
</dbReference>
<dbReference type="InterPro" id="IPR024079">
    <property type="entry name" value="MetalloPept_cat_dom_sf"/>
</dbReference>
<dbReference type="InterPro" id="IPR057256">
    <property type="entry name" value="MtfA_enterob"/>
</dbReference>
<dbReference type="InterPro" id="IPR010384">
    <property type="entry name" value="MtfA_fam"/>
</dbReference>
<dbReference type="InterPro" id="IPR042252">
    <property type="entry name" value="MtfA_N"/>
</dbReference>
<dbReference type="NCBIfam" id="NF011939">
    <property type="entry name" value="PRK15410.1"/>
    <property type="match status" value="1"/>
</dbReference>
<dbReference type="PANTHER" id="PTHR30164">
    <property type="entry name" value="MTFA PEPTIDASE"/>
    <property type="match status" value="1"/>
</dbReference>
<dbReference type="PANTHER" id="PTHR30164:SF2">
    <property type="entry name" value="PROTEIN MTFA"/>
    <property type="match status" value="1"/>
</dbReference>
<dbReference type="Pfam" id="PF06167">
    <property type="entry name" value="Peptidase_M90"/>
    <property type="match status" value="1"/>
</dbReference>
<dbReference type="SUPFAM" id="SSF55486">
    <property type="entry name" value="Metalloproteases ('zincins'), catalytic domain"/>
    <property type="match status" value="1"/>
</dbReference>
<feature type="chain" id="PRO_0000316315" description="Mlc titration factor A">
    <location>
        <begin position="1"/>
        <end position="265"/>
    </location>
</feature>
<feature type="binding site" evidence="1">
    <location>
        <position position="111"/>
    </location>
    <ligand>
        <name>Zn(2+)</name>
        <dbReference type="ChEBI" id="CHEBI:29105"/>
    </ligand>
</feature>
<feature type="binding site" evidence="1">
    <location>
        <position position="148"/>
    </location>
    <ligand>
        <name>Zn(2+)</name>
        <dbReference type="ChEBI" id="CHEBI:29105"/>
    </ligand>
</feature>
<feature type="binding site" evidence="1">
    <location>
        <position position="152"/>
    </location>
    <ligand>
        <name>Zn(2+)</name>
        <dbReference type="ChEBI" id="CHEBI:29105"/>
    </ligand>
</feature>
<feature type="binding site" evidence="1">
    <location>
        <position position="211"/>
    </location>
    <ligand>
        <name>Zn(2+)</name>
        <dbReference type="ChEBI" id="CHEBI:29105"/>
    </ligand>
</feature>
<feature type="sequence conflict" description="In Ref. 1; AAD37508." evidence="2" ref="1">
    <original>A</original>
    <variation>T</variation>
    <location>
        <position position="41"/>
    </location>
</feature>
<feature type="sequence conflict" description="In Ref. 1; AAD37508." evidence="2" ref="1">
    <original>N</original>
    <variation>D</variation>
    <location>
        <position position="61"/>
    </location>
</feature>
<feature type="sequence conflict" description="In Ref. 1; AAD37508." evidence="2" ref="1">
    <original>S</original>
    <variation>P</variation>
    <location>
        <position position="169"/>
    </location>
</feature>
<proteinExistence type="inferred from homology"/>
<sequence length="265" mass="30238">MIKWPWKVQESAHQTALPWQEALSIPLLTCLTEQEQSKLVALAERFLQQKRLVPLQGFELNSLRSCRIALLFCLPVLELGLEWLDGFHEVLIYPAPFVVDDEWEDDIGLVHNQRIVQSGQSWQQGPIVLNWLDIQDSFDASGFNLIIHEVAHKLDTRNGDRASGVPFISLREVAGWEHDLHAAMNNIQEEIELVGENAASIDAYAASDPAECFAVLSEYFFSAPELFAPRFPSLWQRFCQFYQQDPLQRLHHANDTDSFSATNVH</sequence>
<keyword id="KW-0031">Aminopeptidase</keyword>
<keyword id="KW-0963">Cytoplasm</keyword>
<keyword id="KW-0378">Hydrolase</keyword>
<keyword id="KW-0479">Metal-binding</keyword>
<keyword id="KW-0482">Metalloprotease</keyword>
<keyword id="KW-0645">Protease</keyword>
<keyword id="KW-0862">Zinc</keyword>
<protein>
    <recommendedName>
        <fullName evidence="1">Mlc titration factor A</fullName>
    </recommendedName>
    <alternativeName>
        <fullName evidence="1">Probable zinc metallopeptidase MtfA</fullName>
        <ecNumber evidence="1">3.4.11.-</ecNumber>
    </alternativeName>
</protein>